<comment type="function">
    <text evidence="1">Catalyzes oxygen-dependent 5-hydroxyuridine (ho5U) modification at position 34 in tRNAs.</text>
</comment>
<comment type="catalytic activity">
    <reaction evidence="1">
        <text>uridine(34) in tRNA + AH2 + O2 = 5-hydroxyuridine(34) in tRNA + A + H2O</text>
        <dbReference type="Rhea" id="RHEA:64224"/>
        <dbReference type="Rhea" id="RHEA-COMP:11727"/>
        <dbReference type="Rhea" id="RHEA-COMP:13381"/>
        <dbReference type="ChEBI" id="CHEBI:13193"/>
        <dbReference type="ChEBI" id="CHEBI:15377"/>
        <dbReference type="ChEBI" id="CHEBI:15379"/>
        <dbReference type="ChEBI" id="CHEBI:17499"/>
        <dbReference type="ChEBI" id="CHEBI:65315"/>
        <dbReference type="ChEBI" id="CHEBI:136877"/>
    </reaction>
</comment>
<comment type="similarity">
    <text evidence="1">Belongs to the TrhO family.</text>
</comment>
<name>TRHO_BARBK</name>
<reference key="1">
    <citation type="submission" date="2006-12" db="EMBL/GenBank/DDBJ databases">
        <authorList>
            <person name="Hendrix L."/>
            <person name="Mohamoud Y."/>
            <person name="Radune D."/>
            <person name="Shvartsbeyn A."/>
            <person name="Daugherty S."/>
            <person name="Dodson R."/>
            <person name="Durkin A.S."/>
            <person name="Harkins D."/>
            <person name="Huot H."/>
            <person name="Kothari S.P."/>
            <person name="Madupu R."/>
            <person name="Li J."/>
            <person name="Nelson W.C."/>
            <person name="Shrivastava S."/>
            <person name="Giglio M.G."/>
            <person name="Haft D."/>
            <person name="Selengut J."/>
            <person name="Fraser-Ligget C."/>
            <person name="Seshadri R."/>
        </authorList>
    </citation>
    <scope>NUCLEOTIDE SEQUENCE [LARGE SCALE GENOMIC DNA]</scope>
    <source>
        <strain>ATCC 35685 / KC583 / Herrer 020/F12,63</strain>
    </source>
</reference>
<gene>
    <name evidence="1" type="primary">trhO</name>
    <name type="ordered locus">BARBAKC583_1091</name>
</gene>
<proteinExistence type="inferred from homology"/>
<organism>
    <name type="scientific">Bartonella bacilliformis (strain ATCC 35685 / KC583 / Herrer 020/F12,63)</name>
    <dbReference type="NCBI Taxonomy" id="360095"/>
    <lineage>
        <taxon>Bacteria</taxon>
        <taxon>Pseudomonadati</taxon>
        <taxon>Pseudomonadota</taxon>
        <taxon>Alphaproteobacteria</taxon>
        <taxon>Hyphomicrobiales</taxon>
        <taxon>Bartonellaceae</taxon>
        <taxon>Bartonella</taxon>
    </lineage>
</organism>
<accession>A1UTQ0</accession>
<evidence type="ECO:0000255" key="1">
    <source>
        <dbReference type="HAMAP-Rule" id="MF_00469"/>
    </source>
</evidence>
<keyword id="KW-0560">Oxidoreductase</keyword>
<keyword id="KW-0819">tRNA processing</keyword>
<dbReference type="EC" id="1.14.-.-" evidence="1"/>
<dbReference type="EMBL" id="CP000524">
    <property type="protein sequence ID" value="ABM45011.1"/>
    <property type="molecule type" value="Genomic_DNA"/>
</dbReference>
<dbReference type="RefSeq" id="WP_005767671.1">
    <property type="nucleotide sequence ID" value="NC_008783.1"/>
</dbReference>
<dbReference type="SMR" id="A1UTQ0"/>
<dbReference type="GeneID" id="4684237"/>
<dbReference type="KEGG" id="bbk:BARBAKC583_1091"/>
<dbReference type="PATRIC" id="fig|360095.6.peg.1053"/>
<dbReference type="eggNOG" id="COG1054">
    <property type="taxonomic scope" value="Bacteria"/>
</dbReference>
<dbReference type="HOGENOM" id="CLU_038878_0_0_5"/>
<dbReference type="OrthoDB" id="9778326at2"/>
<dbReference type="Proteomes" id="UP000000643">
    <property type="component" value="Chromosome"/>
</dbReference>
<dbReference type="GO" id="GO:0016705">
    <property type="term" value="F:oxidoreductase activity, acting on paired donors, with incorporation or reduction of molecular oxygen"/>
    <property type="evidence" value="ECO:0007669"/>
    <property type="project" value="UniProtKB-UniRule"/>
</dbReference>
<dbReference type="GO" id="GO:0006400">
    <property type="term" value="P:tRNA modification"/>
    <property type="evidence" value="ECO:0007669"/>
    <property type="project" value="UniProtKB-UniRule"/>
</dbReference>
<dbReference type="CDD" id="cd01518">
    <property type="entry name" value="RHOD_YceA"/>
    <property type="match status" value="1"/>
</dbReference>
<dbReference type="Gene3D" id="3.30.70.100">
    <property type="match status" value="1"/>
</dbReference>
<dbReference type="Gene3D" id="3.40.250.10">
    <property type="entry name" value="Rhodanese-like domain"/>
    <property type="match status" value="1"/>
</dbReference>
<dbReference type="HAMAP" id="MF_00469">
    <property type="entry name" value="TrhO"/>
    <property type="match status" value="1"/>
</dbReference>
<dbReference type="InterPro" id="IPR001763">
    <property type="entry name" value="Rhodanese-like_dom"/>
</dbReference>
<dbReference type="InterPro" id="IPR036873">
    <property type="entry name" value="Rhodanese-like_dom_sf"/>
</dbReference>
<dbReference type="InterPro" id="IPR020936">
    <property type="entry name" value="TrhO"/>
</dbReference>
<dbReference type="InterPro" id="IPR040503">
    <property type="entry name" value="TRHO_N"/>
</dbReference>
<dbReference type="NCBIfam" id="NF001136">
    <property type="entry name" value="PRK00142.1-4"/>
    <property type="match status" value="1"/>
</dbReference>
<dbReference type="PANTHER" id="PTHR43268:SF3">
    <property type="entry name" value="RHODANESE-LIKE DOMAIN-CONTAINING PROTEIN 7-RELATED"/>
    <property type="match status" value="1"/>
</dbReference>
<dbReference type="PANTHER" id="PTHR43268">
    <property type="entry name" value="THIOSULFATE SULFURTRANSFERASE/RHODANESE-LIKE DOMAIN-CONTAINING PROTEIN 2"/>
    <property type="match status" value="1"/>
</dbReference>
<dbReference type="Pfam" id="PF00581">
    <property type="entry name" value="Rhodanese"/>
    <property type="match status" value="1"/>
</dbReference>
<dbReference type="Pfam" id="PF17773">
    <property type="entry name" value="UPF0176_N"/>
    <property type="match status" value="1"/>
</dbReference>
<dbReference type="SMART" id="SM00450">
    <property type="entry name" value="RHOD"/>
    <property type="match status" value="1"/>
</dbReference>
<dbReference type="SUPFAM" id="SSF52821">
    <property type="entry name" value="Rhodanese/Cell cycle control phosphatase"/>
    <property type="match status" value="1"/>
</dbReference>
<dbReference type="PROSITE" id="PS50206">
    <property type="entry name" value="RHODANESE_3"/>
    <property type="match status" value="1"/>
</dbReference>
<feature type="chain" id="PRO_1000013723" description="tRNA uridine(34) hydroxylase">
    <location>
        <begin position="1"/>
        <end position="305"/>
    </location>
</feature>
<feature type="domain" description="Rhodanese" evidence="1">
    <location>
        <begin position="124"/>
        <end position="219"/>
    </location>
</feature>
<feature type="active site" description="Cysteine persulfide intermediate" evidence="1">
    <location>
        <position position="179"/>
    </location>
</feature>
<protein>
    <recommendedName>
        <fullName evidence="1">tRNA uridine(34) hydroxylase</fullName>
        <ecNumber evidence="1">1.14.-.-</ecNumber>
    </recommendedName>
    <alternativeName>
        <fullName evidence="1">tRNA hydroxylation protein O</fullName>
    </alternativeName>
</protein>
<sequence length="305" mass="35033">MEKKFKVAALYCFADLKHYQKLQKPLLDLCQENGIKGTLLLAKEGINGTVAGSCAAIETLVRFITAEPAFQTPELKYSWASKMPFHRIKVRLKKEIVTMGVEGINPLKAVGTYVAPEDWNALIQDEETLVVDTRNDYEYMLGSFQGAVDPNIKTFREFPQWVANHQDELKKKKRIAMFCTGGIRCEKSTSYMRELGYEEVYHLKGGILQYLETIPKEESLWQGECFVFDERVSVRHGLEESGRELCRACRYPLGAEGKLSSHYEEGVSCDACYDTRSEFDKQRFRERHRQFQLAKARTMNSHQGL</sequence>